<dbReference type="EMBL" id="BA000001">
    <property type="protein sequence ID" value="BAA30634.1"/>
    <property type="molecule type" value="Genomic_DNA"/>
</dbReference>
<dbReference type="PIR" id="B71029">
    <property type="entry name" value="B71029"/>
</dbReference>
<dbReference type="SMR" id="O59193"/>
<dbReference type="STRING" id="70601.gene:9378508"/>
<dbReference type="EnsemblBacteria" id="BAA30634">
    <property type="protein sequence ID" value="BAA30634"/>
    <property type="gene ID" value="BAA30634"/>
</dbReference>
<dbReference type="KEGG" id="pho:PH1524"/>
<dbReference type="eggNOG" id="arCOG04061">
    <property type="taxonomic scope" value="Archaea"/>
</dbReference>
<dbReference type="Proteomes" id="UP000000752">
    <property type="component" value="Chromosome"/>
</dbReference>
<dbReference type="GO" id="GO:0003723">
    <property type="term" value="F:RNA binding"/>
    <property type="evidence" value="ECO:0007669"/>
    <property type="project" value="UniProtKB-UniRule"/>
</dbReference>
<dbReference type="GO" id="GO:0015031">
    <property type="term" value="P:protein transport"/>
    <property type="evidence" value="ECO:0007669"/>
    <property type="project" value="UniProtKB-UniRule"/>
</dbReference>
<dbReference type="CDD" id="cd14359">
    <property type="entry name" value="UBA_AeNAC"/>
    <property type="match status" value="1"/>
</dbReference>
<dbReference type="Gene3D" id="1.10.8.10">
    <property type="entry name" value="DNA helicase RuvA subunit, C-terminal domain"/>
    <property type="match status" value="1"/>
</dbReference>
<dbReference type="Gene3D" id="2.20.70.30">
    <property type="entry name" value="Nascent polypeptide-associated complex domain"/>
    <property type="match status" value="1"/>
</dbReference>
<dbReference type="HAMAP" id="MF_00814">
    <property type="entry name" value="NAC_arch"/>
    <property type="match status" value="1"/>
</dbReference>
<dbReference type="InterPro" id="IPR044034">
    <property type="entry name" value="NAC-like_UBA"/>
</dbReference>
<dbReference type="InterPro" id="IPR038187">
    <property type="entry name" value="NAC_A/B_dom_sf"/>
</dbReference>
<dbReference type="InterPro" id="IPR005231">
    <property type="entry name" value="NAC_arc"/>
</dbReference>
<dbReference type="InterPro" id="IPR002715">
    <property type="entry name" value="Nas_poly-pep-assoc_cplx_dom"/>
</dbReference>
<dbReference type="InterPro" id="IPR009060">
    <property type="entry name" value="UBA-like_sf"/>
</dbReference>
<dbReference type="NCBIfam" id="TIGR00264">
    <property type="entry name" value="archaeal-type nascent polypeptide-associated complex protein"/>
    <property type="match status" value="1"/>
</dbReference>
<dbReference type="Pfam" id="PF01849">
    <property type="entry name" value="NAC"/>
    <property type="match status" value="1"/>
</dbReference>
<dbReference type="Pfam" id="PF19026">
    <property type="entry name" value="UBA_HYPK"/>
    <property type="match status" value="1"/>
</dbReference>
<dbReference type="SMART" id="SM01407">
    <property type="entry name" value="NAC"/>
    <property type="match status" value="1"/>
</dbReference>
<dbReference type="SUPFAM" id="SSF46934">
    <property type="entry name" value="UBA-like"/>
    <property type="match status" value="1"/>
</dbReference>
<dbReference type="PROSITE" id="PS51151">
    <property type="entry name" value="NAC_AB"/>
    <property type="match status" value="1"/>
</dbReference>
<name>NAC_PYRHO</name>
<keyword id="KW-0653">Protein transport</keyword>
<keyword id="KW-0694">RNA-binding</keyword>
<keyword id="KW-0813">Transport</keyword>
<sequence length="115" mass="12995">MRKMMPMNPKQLKKLMKQLDMRQLEGVKEVIIKMEDREIIIKEPIVTVIKAMGEKMYQIAGGSEEEKAIINISEEDIKLVMEQAGVDYETAKKALEETGGDLAEAILRLTDSGVE</sequence>
<gene>
    <name evidence="1" type="primary">nac</name>
    <name type="ordered locus">PH1524</name>
</gene>
<comment type="function">
    <text evidence="1">Contacts the emerging nascent chain on the ribosome.</text>
</comment>
<comment type="subunit">
    <text evidence="1">Homodimer. Interacts with the ribosome. Binds ribosomal RNA.</text>
</comment>
<comment type="similarity">
    <text evidence="1">Belongs to the NAC-alpha family.</text>
</comment>
<evidence type="ECO:0000255" key="1">
    <source>
        <dbReference type="HAMAP-Rule" id="MF_00814"/>
    </source>
</evidence>
<protein>
    <recommendedName>
        <fullName evidence="1">Nascent polypeptide-associated complex protein</fullName>
    </recommendedName>
</protein>
<organism>
    <name type="scientific">Pyrococcus horikoshii (strain ATCC 700860 / DSM 12428 / JCM 9974 / NBRC 100139 / OT-3)</name>
    <dbReference type="NCBI Taxonomy" id="70601"/>
    <lineage>
        <taxon>Archaea</taxon>
        <taxon>Methanobacteriati</taxon>
        <taxon>Methanobacteriota</taxon>
        <taxon>Thermococci</taxon>
        <taxon>Thermococcales</taxon>
        <taxon>Thermococcaceae</taxon>
        <taxon>Pyrococcus</taxon>
    </lineage>
</organism>
<proteinExistence type="inferred from homology"/>
<reference key="1">
    <citation type="journal article" date="1998" name="DNA Res.">
        <title>Complete sequence and gene organization of the genome of a hyper-thermophilic archaebacterium, Pyrococcus horikoshii OT3.</title>
        <authorList>
            <person name="Kawarabayasi Y."/>
            <person name="Sawada M."/>
            <person name="Horikawa H."/>
            <person name="Haikawa Y."/>
            <person name="Hino Y."/>
            <person name="Yamamoto S."/>
            <person name="Sekine M."/>
            <person name="Baba S."/>
            <person name="Kosugi H."/>
            <person name="Hosoyama A."/>
            <person name="Nagai Y."/>
            <person name="Sakai M."/>
            <person name="Ogura K."/>
            <person name="Otsuka R."/>
            <person name="Nakazawa H."/>
            <person name="Takamiya M."/>
            <person name="Ohfuku Y."/>
            <person name="Funahashi T."/>
            <person name="Tanaka T."/>
            <person name="Kudoh Y."/>
            <person name="Yamazaki J."/>
            <person name="Kushida N."/>
            <person name="Oguchi A."/>
            <person name="Aoki K."/>
            <person name="Yoshizawa T."/>
            <person name="Nakamura Y."/>
            <person name="Robb F.T."/>
            <person name="Horikoshi K."/>
            <person name="Masuchi Y."/>
            <person name="Shizuya H."/>
            <person name="Kikuchi H."/>
        </authorList>
    </citation>
    <scope>NUCLEOTIDE SEQUENCE [LARGE SCALE GENOMIC DNA]</scope>
    <source>
        <strain>ATCC 700860 / DSM 12428 / JCM 9974 / NBRC 100139 / OT-3</strain>
    </source>
</reference>
<feature type="chain" id="PRO_0000135609" description="Nascent polypeptide-associated complex protein">
    <location>
        <begin position="1"/>
        <end position="115"/>
    </location>
</feature>
<feature type="domain" description="NAC-A/B" evidence="1">
    <location>
        <begin position="6"/>
        <end position="72"/>
    </location>
</feature>
<accession>O59193</accession>